<proteinExistence type="inferred from homology"/>
<name>RIBF_HAEIN</name>
<keyword id="KW-0067">ATP-binding</keyword>
<keyword id="KW-0274">FAD</keyword>
<keyword id="KW-0285">Flavoprotein</keyword>
<keyword id="KW-0288">FMN</keyword>
<keyword id="KW-0418">Kinase</keyword>
<keyword id="KW-0511">Multifunctional enzyme</keyword>
<keyword id="KW-0547">Nucleotide-binding</keyword>
<keyword id="KW-0548">Nucleotidyltransferase</keyword>
<keyword id="KW-1185">Reference proteome</keyword>
<keyword id="KW-0808">Transferase</keyword>
<dbReference type="EC" id="2.7.1.26" evidence="1"/>
<dbReference type="EC" id="2.7.7.2" evidence="1"/>
<dbReference type="EMBL" id="L42023">
    <property type="protein sequence ID" value="AAC22622.1"/>
    <property type="status" value="ALT_INIT"/>
    <property type="molecule type" value="Genomic_DNA"/>
</dbReference>
<dbReference type="PIR" id="H64162">
    <property type="entry name" value="H64162"/>
</dbReference>
<dbReference type="RefSeq" id="NP_439124.1">
    <property type="nucleotide sequence ID" value="NC_000907.1"/>
</dbReference>
<dbReference type="SMR" id="P44957"/>
<dbReference type="STRING" id="71421.HI_0963"/>
<dbReference type="EnsemblBacteria" id="AAC22622">
    <property type="protein sequence ID" value="AAC22622"/>
    <property type="gene ID" value="HI_0963"/>
</dbReference>
<dbReference type="KEGG" id="hin:HI_0963"/>
<dbReference type="PATRIC" id="fig|71421.8.peg.1005"/>
<dbReference type="eggNOG" id="COG0196">
    <property type="taxonomic scope" value="Bacteria"/>
</dbReference>
<dbReference type="HOGENOM" id="CLU_048437_0_1_6"/>
<dbReference type="OrthoDB" id="9803667at2"/>
<dbReference type="PhylomeDB" id="P44957"/>
<dbReference type="UniPathway" id="UPA00276">
    <property type="reaction ID" value="UER00406"/>
</dbReference>
<dbReference type="UniPathway" id="UPA00277">
    <property type="reaction ID" value="UER00407"/>
</dbReference>
<dbReference type="Proteomes" id="UP000000579">
    <property type="component" value="Chromosome"/>
</dbReference>
<dbReference type="GO" id="GO:0005524">
    <property type="term" value="F:ATP binding"/>
    <property type="evidence" value="ECO:0007669"/>
    <property type="project" value="UniProtKB-KW"/>
</dbReference>
<dbReference type="GO" id="GO:0003919">
    <property type="term" value="F:FMN adenylyltransferase activity"/>
    <property type="evidence" value="ECO:0007669"/>
    <property type="project" value="UniProtKB-EC"/>
</dbReference>
<dbReference type="GO" id="GO:0008531">
    <property type="term" value="F:riboflavin kinase activity"/>
    <property type="evidence" value="ECO:0000318"/>
    <property type="project" value="GO_Central"/>
</dbReference>
<dbReference type="GO" id="GO:0006747">
    <property type="term" value="P:FAD biosynthetic process"/>
    <property type="evidence" value="ECO:0007669"/>
    <property type="project" value="UniProtKB-UniPathway"/>
</dbReference>
<dbReference type="GO" id="GO:0009398">
    <property type="term" value="P:FMN biosynthetic process"/>
    <property type="evidence" value="ECO:0000318"/>
    <property type="project" value="GO_Central"/>
</dbReference>
<dbReference type="GO" id="GO:0009231">
    <property type="term" value="P:riboflavin biosynthetic process"/>
    <property type="evidence" value="ECO:0007669"/>
    <property type="project" value="InterPro"/>
</dbReference>
<dbReference type="GO" id="GO:0006771">
    <property type="term" value="P:riboflavin metabolic process"/>
    <property type="evidence" value="ECO:0000318"/>
    <property type="project" value="GO_Central"/>
</dbReference>
<dbReference type="CDD" id="cd02064">
    <property type="entry name" value="FAD_synthetase_N"/>
    <property type="match status" value="1"/>
</dbReference>
<dbReference type="FunFam" id="2.40.30.30:FF:000001">
    <property type="entry name" value="Riboflavin biosynthesis protein"/>
    <property type="match status" value="1"/>
</dbReference>
<dbReference type="FunFam" id="3.40.50.620:FF:000021">
    <property type="entry name" value="Riboflavin biosynthesis protein"/>
    <property type="match status" value="1"/>
</dbReference>
<dbReference type="Gene3D" id="3.40.50.620">
    <property type="entry name" value="HUPs"/>
    <property type="match status" value="1"/>
</dbReference>
<dbReference type="Gene3D" id="2.40.30.30">
    <property type="entry name" value="Riboflavin kinase-like"/>
    <property type="match status" value="1"/>
</dbReference>
<dbReference type="InterPro" id="IPR004821">
    <property type="entry name" value="Cyt_trans-like"/>
</dbReference>
<dbReference type="InterPro" id="IPR015864">
    <property type="entry name" value="FAD_synthase"/>
</dbReference>
<dbReference type="InterPro" id="IPR023468">
    <property type="entry name" value="Riboflavin_kinase"/>
</dbReference>
<dbReference type="InterPro" id="IPR002606">
    <property type="entry name" value="Riboflavin_kinase_bac"/>
</dbReference>
<dbReference type="InterPro" id="IPR015865">
    <property type="entry name" value="Riboflavin_kinase_bac/euk"/>
</dbReference>
<dbReference type="InterPro" id="IPR023465">
    <property type="entry name" value="Riboflavin_kinase_dom_sf"/>
</dbReference>
<dbReference type="InterPro" id="IPR014729">
    <property type="entry name" value="Rossmann-like_a/b/a_fold"/>
</dbReference>
<dbReference type="NCBIfam" id="TIGR00125">
    <property type="entry name" value="cyt_tran_rel"/>
    <property type="match status" value="1"/>
</dbReference>
<dbReference type="NCBIfam" id="NF004159">
    <property type="entry name" value="PRK05627.1-2"/>
    <property type="match status" value="1"/>
</dbReference>
<dbReference type="NCBIfam" id="NF004160">
    <property type="entry name" value="PRK05627.1-3"/>
    <property type="match status" value="1"/>
</dbReference>
<dbReference type="NCBIfam" id="NF004162">
    <property type="entry name" value="PRK05627.1-5"/>
    <property type="match status" value="1"/>
</dbReference>
<dbReference type="NCBIfam" id="NF004163">
    <property type="entry name" value="PRK05627.1-6"/>
    <property type="match status" value="1"/>
</dbReference>
<dbReference type="NCBIfam" id="TIGR00083">
    <property type="entry name" value="ribF"/>
    <property type="match status" value="1"/>
</dbReference>
<dbReference type="PANTHER" id="PTHR22749:SF6">
    <property type="entry name" value="RIBOFLAVIN KINASE"/>
    <property type="match status" value="1"/>
</dbReference>
<dbReference type="PANTHER" id="PTHR22749">
    <property type="entry name" value="RIBOFLAVIN KINASE/FMN ADENYLYLTRANSFERASE"/>
    <property type="match status" value="1"/>
</dbReference>
<dbReference type="Pfam" id="PF06574">
    <property type="entry name" value="FAD_syn"/>
    <property type="match status" value="1"/>
</dbReference>
<dbReference type="Pfam" id="PF01687">
    <property type="entry name" value="Flavokinase"/>
    <property type="match status" value="1"/>
</dbReference>
<dbReference type="PIRSF" id="PIRSF004491">
    <property type="entry name" value="FAD_Synth"/>
    <property type="match status" value="1"/>
</dbReference>
<dbReference type="SMART" id="SM00904">
    <property type="entry name" value="Flavokinase"/>
    <property type="match status" value="1"/>
</dbReference>
<dbReference type="SUPFAM" id="SSF52374">
    <property type="entry name" value="Nucleotidylyl transferase"/>
    <property type="match status" value="1"/>
</dbReference>
<dbReference type="SUPFAM" id="SSF82114">
    <property type="entry name" value="Riboflavin kinase-like"/>
    <property type="match status" value="1"/>
</dbReference>
<comment type="function">
    <text evidence="1">Catalyzes the phosphorylation of riboflavin to FMN followed by the adenylation of FMN to FAD.</text>
</comment>
<comment type="catalytic activity">
    <reaction evidence="1">
        <text>riboflavin + ATP = FMN + ADP + H(+)</text>
        <dbReference type="Rhea" id="RHEA:14357"/>
        <dbReference type="ChEBI" id="CHEBI:15378"/>
        <dbReference type="ChEBI" id="CHEBI:30616"/>
        <dbReference type="ChEBI" id="CHEBI:57986"/>
        <dbReference type="ChEBI" id="CHEBI:58210"/>
        <dbReference type="ChEBI" id="CHEBI:456216"/>
        <dbReference type="EC" id="2.7.1.26"/>
    </reaction>
</comment>
<comment type="catalytic activity">
    <reaction evidence="1">
        <text>FMN + ATP + H(+) = FAD + diphosphate</text>
        <dbReference type="Rhea" id="RHEA:17237"/>
        <dbReference type="ChEBI" id="CHEBI:15378"/>
        <dbReference type="ChEBI" id="CHEBI:30616"/>
        <dbReference type="ChEBI" id="CHEBI:33019"/>
        <dbReference type="ChEBI" id="CHEBI:57692"/>
        <dbReference type="ChEBI" id="CHEBI:58210"/>
        <dbReference type="EC" id="2.7.7.2"/>
    </reaction>
</comment>
<comment type="pathway">
    <text evidence="1">Cofactor biosynthesis; FAD biosynthesis; FAD from FMN: step 1/1.</text>
</comment>
<comment type="pathway">
    <text evidence="1">Cofactor biosynthesis; FMN biosynthesis; FMN from riboflavin (ATP route): step 1/1.</text>
</comment>
<comment type="similarity">
    <text evidence="2">Belongs to the RibF family.</text>
</comment>
<comment type="sequence caution" evidence="2">
    <conflict type="erroneous initiation">
        <sequence resource="EMBL-CDS" id="AAC22622"/>
    </conflict>
    <text>Extended N-terminus.</text>
</comment>
<evidence type="ECO:0000250" key="1">
    <source>
        <dbReference type="UniProtKB" id="Q59263"/>
    </source>
</evidence>
<evidence type="ECO:0000305" key="2"/>
<sequence>MQLIRGLHNANRVLQGCALTIGNFDGVHLGHQTVLRHLRQKADELNLPMAVLLFESQPREYFMGKNAPARLMRLRDKIYYLEKAKVDVVIVAKFDRTFAEQLADVFIEQTLVNHLHVKFLSIGDDFKFGSKRQGNFAMLQAASKRFGFIVEDNRSFCLDAQRISSTAIREALANDDLQLAENLLGKPYRIFGRVIHGNKLGRTIGFPTANIRLHRQVNPIKGVYAVKVRLKSGEIFNGVANMGKRPTINGLMQLLEVHLFDFSQNIYGQMVEVEFCHKIRNEIKFPSFDDLKVQIEKDVETAKAFFNS</sequence>
<accession>P44957</accession>
<organism>
    <name type="scientific">Haemophilus influenzae (strain ATCC 51907 / DSM 11121 / KW20 / Rd)</name>
    <dbReference type="NCBI Taxonomy" id="71421"/>
    <lineage>
        <taxon>Bacteria</taxon>
        <taxon>Pseudomonadati</taxon>
        <taxon>Pseudomonadota</taxon>
        <taxon>Gammaproteobacteria</taxon>
        <taxon>Pasteurellales</taxon>
        <taxon>Pasteurellaceae</taxon>
        <taxon>Haemophilus</taxon>
    </lineage>
</organism>
<reference key="1">
    <citation type="journal article" date="1995" name="Science">
        <title>Whole-genome random sequencing and assembly of Haemophilus influenzae Rd.</title>
        <authorList>
            <person name="Fleischmann R.D."/>
            <person name="Adams M.D."/>
            <person name="White O."/>
            <person name="Clayton R.A."/>
            <person name="Kirkness E.F."/>
            <person name="Kerlavage A.R."/>
            <person name="Bult C.J."/>
            <person name="Tomb J.-F."/>
            <person name="Dougherty B.A."/>
            <person name="Merrick J.M."/>
            <person name="McKenney K."/>
            <person name="Sutton G.G."/>
            <person name="FitzHugh W."/>
            <person name="Fields C.A."/>
            <person name="Gocayne J.D."/>
            <person name="Scott J.D."/>
            <person name="Shirley R."/>
            <person name="Liu L.-I."/>
            <person name="Glodek A."/>
            <person name="Kelley J.M."/>
            <person name="Weidman J.F."/>
            <person name="Phillips C.A."/>
            <person name="Spriggs T."/>
            <person name="Hedblom E."/>
            <person name="Cotton M.D."/>
            <person name="Utterback T.R."/>
            <person name="Hanna M.C."/>
            <person name="Nguyen D.T."/>
            <person name="Saudek D.M."/>
            <person name="Brandon R.C."/>
            <person name="Fine L.D."/>
            <person name="Fritchman J.L."/>
            <person name="Fuhrmann J.L."/>
            <person name="Geoghagen N.S.M."/>
            <person name="Gnehm C.L."/>
            <person name="McDonald L.A."/>
            <person name="Small K.V."/>
            <person name="Fraser C.M."/>
            <person name="Smith H.O."/>
            <person name="Venter J.C."/>
        </authorList>
    </citation>
    <scope>NUCLEOTIDE SEQUENCE [LARGE SCALE GENOMIC DNA]</scope>
    <source>
        <strain>ATCC 51907 / DSM 11121 / KW20 / Rd</strain>
    </source>
</reference>
<protein>
    <recommendedName>
        <fullName evidence="1">Bifunctional riboflavin kinase/FMN adenylyltransferase</fullName>
    </recommendedName>
    <alternativeName>
        <fullName evidence="1">Riboflavin biosynthesis protein RibF</fullName>
    </alternativeName>
    <domain>
        <recommendedName>
            <fullName evidence="1">Riboflavin kinase</fullName>
            <ecNumber evidence="1">2.7.1.26</ecNumber>
        </recommendedName>
        <alternativeName>
            <fullName evidence="1">Flavokinase</fullName>
        </alternativeName>
    </domain>
    <domain>
        <recommendedName>
            <fullName evidence="1">FMN adenylyltransferase</fullName>
            <ecNumber evidence="1">2.7.7.2</ecNumber>
        </recommendedName>
        <alternativeName>
            <fullName evidence="1">FAD pyrophosphorylase</fullName>
        </alternativeName>
        <alternativeName>
            <fullName evidence="1">FAD synthase</fullName>
        </alternativeName>
    </domain>
</protein>
<feature type="chain" id="PRO_0000194140" description="Bifunctional riboflavin kinase/FMN adenylyltransferase">
    <location>
        <begin position="1"/>
        <end position="308"/>
    </location>
</feature>
<gene>
    <name type="primary">ribF</name>
    <name type="ordered locus">HI_0963</name>
</gene>